<comment type="function">
    <text evidence="8">Probable metal transporter. Probably acts redundantly with the other metal transport proteins cnnm-1, cnnm-3, cnnm-4 and cnnm-5 to regulate Mg(2+) homeostasis.</text>
</comment>
<comment type="subcellular location">
    <subcellularLocation>
        <location evidence="7">Cell membrane</location>
        <topology evidence="1">Multi-pass membrane protein</topology>
    </subcellularLocation>
</comment>
<comment type="disruption phenotype">
    <text evidence="6">No visible phenotype. Double knockout with cnnm-3 results in 22% sterility. Quintuple knockout with cnnm-1, cnnm-3, cnnm-4 and cnnm-5 results in a reduced lifespan and 100% sterility.</text>
</comment>
<comment type="similarity">
    <text evidence="7">Belongs to the ACDP family.</text>
</comment>
<evidence type="ECO:0000255" key="1"/>
<evidence type="ECO:0000255" key="2">
    <source>
        <dbReference type="PROSITE-ProRule" id="PRU00498"/>
    </source>
</evidence>
<evidence type="ECO:0000255" key="3">
    <source>
        <dbReference type="PROSITE-ProRule" id="PRU00703"/>
    </source>
</evidence>
<evidence type="ECO:0000255" key="4">
    <source>
        <dbReference type="PROSITE-ProRule" id="PRU01193"/>
    </source>
</evidence>
<evidence type="ECO:0000256" key="5">
    <source>
        <dbReference type="SAM" id="MobiDB-lite"/>
    </source>
</evidence>
<evidence type="ECO:0000269" key="6">
    <source>
    </source>
</evidence>
<evidence type="ECO:0000305" key="7"/>
<evidence type="ECO:0000305" key="8">
    <source>
    </source>
</evidence>
<evidence type="ECO:0000312" key="9">
    <source>
        <dbReference type="Proteomes" id="UP000001940"/>
    </source>
</evidence>
<evidence type="ECO:0000312" key="10">
    <source>
        <dbReference type="WormBase" id="R04E5.2"/>
    </source>
</evidence>
<proteinExistence type="inferred from homology"/>
<protein>
    <recommendedName>
        <fullName evidence="7">Metal transporter cnnm-2</fullName>
    </recommendedName>
    <alternativeName>
        <fullName evidence="10">CNNM family homolog 2</fullName>
    </alternativeName>
</protein>
<reference evidence="9" key="1">
    <citation type="journal article" date="1998" name="Science">
        <title>Genome sequence of the nematode C. elegans: a platform for investigating biology.</title>
        <authorList>
            <consortium name="The C. elegans sequencing consortium"/>
        </authorList>
    </citation>
    <scope>NUCLEOTIDE SEQUENCE [LARGE SCALE GENOMIC DNA]</scope>
    <source>
        <strain evidence="9">Bristol N2</strain>
    </source>
</reference>
<reference key="2">
    <citation type="journal article" date="2016" name="PLoS Genet.">
        <title>Mg2+ extrusion from intestinal epithelia by CNNM proteins is essential for gonadogenesis via AMPK-TORC1 signaling in Caenorhabditis elegans.</title>
        <authorList>
            <person name="Ishii T."/>
            <person name="Funato Y."/>
            <person name="Hashizume O."/>
            <person name="Yamazaki D."/>
            <person name="Hirata Y."/>
            <person name="Nishiwaki K."/>
            <person name="Kono N."/>
            <person name="Arai H."/>
            <person name="Miki H."/>
        </authorList>
    </citation>
    <scope>FUNCTION</scope>
    <scope>DISRUPTION PHENOTYPE</scope>
</reference>
<sequence>MIIKVFLRLLLLCAHIVCIDGKLEIRPVVSGVRIESDVDASGFLGYGDAGELLVEANTEVDLVIFGHGLENVEMVTFTDSVCVTSEFNVSESTFYIHKDMKIVFKYAFVAWPQPWRICLKSECHGLIQIDDDRTWIQAVQSTHETFMPVWAQCAILCLLFSISALCSGLTLGLMALTPQELSILMKSGSQREKKHAAAIYPIRCHGNRLLCTVIIMNVIVNTGITLLFDDLAEGLIAFVASTVGIVVFGEILPQSICVKYGLAVGANTIFITKFFMFLLFPITWPLGKILDKYAGVDIDVVNRSRMVEMLKMNMENDACDIDLSTLKIAIGAMELTKKSVRDVMTDIDDVFMLSEDQVLNAETMTKISDSGYTRIPVFEGNNRNKVKNLLYVSDLALIGKDNNITVKAVARFNKRRLRIVDESMPLTALMDEFKLGDYHLAMVAKATEVKKHHHGKFADGTVDSFILKSMKLVEATMMPQVENPEDHPVTLVGLITLEDITEELLQAEITDETDCYVTDDAQKKRRTNTSKKSAAELFCSEKKSERLSLHMLEMTEKWLLEKTPLFGNMNPKAFENLIQRNIREVLIVPPKNSTSPGTLNLFEAGVMSKRFLLILEGKATIRFNEKDLIFECGPWTCFGEAILEKMEMCISDRKEPSTGFFFLPDYNLTVSGPCRFLQISTSSLLHSLRITQFVKEIRTPKISITSDDDFGSPTRKASILDSSPNSRKRSSTSVMNSLALPTARLAAKIASVEELKPLME</sequence>
<feature type="signal peptide" evidence="1">
    <location>
        <begin position="1"/>
        <end position="21"/>
    </location>
</feature>
<feature type="chain" id="PRO_5004327911" description="Metal transporter cnnm-2" evidence="7">
    <location>
        <begin position="22"/>
        <end position="760"/>
    </location>
</feature>
<feature type="topological domain" description="Extracellular" evidence="7">
    <location>
        <begin position="22"/>
        <end position="153"/>
    </location>
</feature>
<feature type="transmembrane region" description="Helical" evidence="1">
    <location>
        <begin position="154"/>
        <end position="174"/>
    </location>
</feature>
<feature type="topological domain" description="Cytoplasmic" evidence="7">
    <location>
        <begin position="175"/>
        <end position="208"/>
    </location>
</feature>
<feature type="transmembrane region" description="Helical" evidence="1">
    <location>
        <begin position="209"/>
        <end position="229"/>
    </location>
</feature>
<feature type="topological domain" description="Extracellular" evidence="7">
    <location>
        <position position="230"/>
    </location>
</feature>
<feature type="transmembrane region" description="Helical" evidence="1">
    <location>
        <begin position="231"/>
        <end position="251"/>
    </location>
</feature>
<feature type="topological domain" description="Cytoplasmic" evidence="7">
    <location>
        <begin position="252"/>
        <end position="261"/>
    </location>
</feature>
<feature type="transmembrane region" description="Helical" evidence="1">
    <location>
        <begin position="262"/>
        <end position="282"/>
    </location>
</feature>
<feature type="topological domain" description="Extracellular" evidence="7">
    <location>
        <begin position="283"/>
        <end position="760"/>
    </location>
</feature>
<feature type="domain" description="CNNM transmembrane" evidence="4">
    <location>
        <begin position="145"/>
        <end position="323"/>
    </location>
</feature>
<feature type="domain" description="CBS 1" evidence="3">
    <location>
        <begin position="344"/>
        <end position="406"/>
    </location>
</feature>
<feature type="domain" description="CBS 2" evidence="3">
    <location>
        <begin position="442"/>
        <end position="512"/>
    </location>
</feature>
<feature type="region of interest" description="Disordered" evidence="5">
    <location>
        <begin position="708"/>
        <end position="734"/>
    </location>
</feature>
<feature type="glycosylation site" description="N-linked (GlcNAc...) asparagine" evidence="2">
    <location>
        <position position="88"/>
    </location>
</feature>
<feature type="glycosylation site" description="N-linked (GlcNAc...) asparagine" evidence="2">
    <location>
        <position position="302"/>
    </location>
</feature>
<feature type="glycosylation site" description="N-linked (GlcNAc...) asparagine" evidence="2">
    <location>
        <position position="403"/>
    </location>
</feature>
<feature type="glycosylation site" description="N-linked (GlcNAc...) asparagine" evidence="2">
    <location>
        <position position="528"/>
    </location>
</feature>
<feature type="glycosylation site" description="N-linked (GlcNAc...) asparagine" evidence="2">
    <location>
        <position position="592"/>
    </location>
</feature>
<feature type="glycosylation site" description="N-linked (GlcNAc...) asparagine" evidence="2">
    <location>
        <position position="667"/>
    </location>
</feature>
<gene>
    <name evidence="10" type="primary">cnnm-2</name>
    <name evidence="10" type="ORF">R04E5.2</name>
</gene>
<accession>Q9GYL2</accession>
<keyword id="KW-1003">Cell membrane</keyword>
<keyword id="KW-0325">Glycoprotein</keyword>
<keyword id="KW-0406">Ion transport</keyword>
<keyword id="KW-0472">Membrane</keyword>
<keyword id="KW-1185">Reference proteome</keyword>
<keyword id="KW-0732">Signal</keyword>
<keyword id="KW-0812">Transmembrane</keyword>
<keyword id="KW-1133">Transmembrane helix</keyword>
<keyword id="KW-0813">Transport</keyword>
<organism evidence="9">
    <name type="scientific">Caenorhabditis elegans</name>
    <dbReference type="NCBI Taxonomy" id="6239"/>
    <lineage>
        <taxon>Eukaryota</taxon>
        <taxon>Metazoa</taxon>
        <taxon>Ecdysozoa</taxon>
        <taxon>Nematoda</taxon>
        <taxon>Chromadorea</taxon>
        <taxon>Rhabditida</taxon>
        <taxon>Rhabditina</taxon>
        <taxon>Rhabditomorpha</taxon>
        <taxon>Rhabditoidea</taxon>
        <taxon>Rhabditidae</taxon>
        <taxon>Peloderinae</taxon>
        <taxon>Caenorhabditis</taxon>
    </lineage>
</organism>
<name>CNNM2_CAEEL</name>
<dbReference type="EMBL" id="BX284606">
    <property type="protein sequence ID" value="CCD65954.2"/>
    <property type="molecule type" value="Genomic_DNA"/>
</dbReference>
<dbReference type="RefSeq" id="NP_001361958.1">
    <property type="nucleotide sequence ID" value="NM_001375092.1"/>
</dbReference>
<dbReference type="RefSeq" id="NP_509493.1">
    <property type="nucleotide sequence ID" value="NM_077092.3"/>
</dbReference>
<dbReference type="SMR" id="Q9GYL2"/>
<dbReference type="FunCoup" id="Q9GYL2">
    <property type="interactions" value="53"/>
</dbReference>
<dbReference type="STRING" id="6239.R04E5.2.1"/>
<dbReference type="GlyCosmos" id="Q9GYL2">
    <property type="glycosylation" value="6 sites, No reported glycans"/>
</dbReference>
<dbReference type="PaxDb" id="6239-R04E5.2"/>
<dbReference type="PeptideAtlas" id="Q9GYL2"/>
<dbReference type="EnsemblMetazoa" id="R04E5.2.1">
    <property type="protein sequence ID" value="R04E5.2.1"/>
    <property type="gene ID" value="WBGene00019869"/>
</dbReference>
<dbReference type="GeneID" id="181129"/>
<dbReference type="UCSC" id="R04E5.2">
    <property type="organism name" value="c. elegans"/>
</dbReference>
<dbReference type="AGR" id="WB:WBGene00019869"/>
<dbReference type="WormBase" id="R04E5.2">
    <property type="protein sequence ID" value="CE53658"/>
    <property type="gene ID" value="WBGene00019869"/>
    <property type="gene designation" value="cnnm-2"/>
</dbReference>
<dbReference type="eggNOG" id="KOG2118">
    <property type="taxonomic scope" value="Eukaryota"/>
</dbReference>
<dbReference type="HOGENOM" id="CLU_011310_1_2_1"/>
<dbReference type="InParanoid" id="Q9GYL2"/>
<dbReference type="OrthoDB" id="5353557at2759"/>
<dbReference type="PhylomeDB" id="Q9GYL2"/>
<dbReference type="PRO" id="PR:Q9GYL2"/>
<dbReference type="Proteomes" id="UP000001940">
    <property type="component" value="Chromosome X"/>
</dbReference>
<dbReference type="Bgee" id="WBGene00019869">
    <property type="expression patterns" value="Expressed in material anatomical entity and 3 other cell types or tissues"/>
</dbReference>
<dbReference type="GO" id="GO:0005886">
    <property type="term" value="C:plasma membrane"/>
    <property type="evidence" value="ECO:0000318"/>
    <property type="project" value="GO_Central"/>
</dbReference>
<dbReference type="GO" id="GO:0022857">
    <property type="term" value="F:transmembrane transporter activity"/>
    <property type="evidence" value="ECO:0000318"/>
    <property type="project" value="GO_Central"/>
</dbReference>
<dbReference type="GO" id="GO:0008340">
    <property type="term" value="P:determination of adult lifespan"/>
    <property type="evidence" value="ECO:0000316"/>
    <property type="project" value="UniProtKB"/>
</dbReference>
<dbReference type="GO" id="GO:0010960">
    <property type="term" value="P:magnesium ion homeostasis"/>
    <property type="evidence" value="ECO:0000318"/>
    <property type="project" value="GO_Central"/>
</dbReference>
<dbReference type="GO" id="GO:0006811">
    <property type="term" value="P:monoatomic ion transport"/>
    <property type="evidence" value="ECO:0007669"/>
    <property type="project" value="UniProtKB-KW"/>
</dbReference>
<dbReference type="GO" id="GO:1905941">
    <property type="term" value="P:positive regulation of gonad development"/>
    <property type="evidence" value="ECO:0000316"/>
    <property type="project" value="UniProtKB"/>
</dbReference>
<dbReference type="CDD" id="cd04590">
    <property type="entry name" value="CBS_pair_CorC_HlyC_assoc"/>
    <property type="match status" value="1"/>
</dbReference>
<dbReference type="Gene3D" id="3.10.580.10">
    <property type="entry name" value="CBS-domain"/>
    <property type="match status" value="1"/>
</dbReference>
<dbReference type="InterPro" id="IPR045095">
    <property type="entry name" value="ACDP"/>
</dbReference>
<dbReference type="InterPro" id="IPR046342">
    <property type="entry name" value="CBS_dom_sf"/>
</dbReference>
<dbReference type="InterPro" id="IPR002550">
    <property type="entry name" value="CNNM"/>
</dbReference>
<dbReference type="InterPro" id="IPR044751">
    <property type="entry name" value="Ion_transp-like_CBS"/>
</dbReference>
<dbReference type="PANTHER" id="PTHR12064">
    <property type="entry name" value="METAL TRANSPORTER CNNM"/>
    <property type="match status" value="1"/>
</dbReference>
<dbReference type="PANTHER" id="PTHR12064:SF23">
    <property type="entry name" value="METAL TRANSPORTER CNNM-2"/>
    <property type="match status" value="1"/>
</dbReference>
<dbReference type="Pfam" id="PF01595">
    <property type="entry name" value="CNNM"/>
    <property type="match status" value="1"/>
</dbReference>
<dbReference type="SUPFAM" id="SSF54631">
    <property type="entry name" value="CBS-domain pair"/>
    <property type="match status" value="1"/>
</dbReference>
<dbReference type="PROSITE" id="PS51846">
    <property type="entry name" value="CNNM"/>
    <property type="match status" value="1"/>
</dbReference>